<keyword id="KW-0067">ATP-binding</keyword>
<keyword id="KW-0460">Magnesium</keyword>
<keyword id="KW-0547">Nucleotide-binding</keyword>
<keyword id="KW-0808">Transferase</keyword>
<keyword id="KW-0819">tRNA processing</keyword>
<feature type="chain" id="PRO_0000377131" description="tRNA dimethylallyltransferase">
    <location>
        <begin position="1"/>
        <end position="322"/>
    </location>
</feature>
<feature type="region of interest" description="Interaction with substrate tRNA" evidence="1">
    <location>
        <begin position="44"/>
        <end position="47"/>
    </location>
</feature>
<feature type="region of interest" description="Interaction with substrate tRNA" evidence="1">
    <location>
        <begin position="168"/>
        <end position="172"/>
    </location>
</feature>
<feature type="region of interest" description="Interaction with substrate tRNA" evidence="1">
    <location>
        <begin position="255"/>
        <end position="260"/>
    </location>
</feature>
<feature type="binding site" evidence="1">
    <location>
        <begin position="19"/>
        <end position="26"/>
    </location>
    <ligand>
        <name>ATP</name>
        <dbReference type="ChEBI" id="CHEBI:30616"/>
    </ligand>
</feature>
<feature type="binding site" evidence="1">
    <location>
        <begin position="21"/>
        <end position="26"/>
    </location>
    <ligand>
        <name>substrate</name>
    </ligand>
</feature>
<feature type="site" description="Interaction with substrate tRNA" evidence="1">
    <location>
        <position position="110"/>
    </location>
</feature>
<feature type="site" description="Interaction with substrate tRNA" evidence="1">
    <location>
        <position position="132"/>
    </location>
</feature>
<comment type="function">
    <text evidence="1">Catalyzes the transfer of a dimethylallyl group onto the adenine at position 37 in tRNAs that read codons beginning with uridine, leading to the formation of N6-(dimethylallyl)adenosine (i(6)A).</text>
</comment>
<comment type="catalytic activity">
    <reaction evidence="1">
        <text>adenosine(37) in tRNA + dimethylallyl diphosphate = N(6)-dimethylallyladenosine(37) in tRNA + diphosphate</text>
        <dbReference type="Rhea" id="RHEA:26482"/>
        <dbReference type="Rhea" id="RHEA-COMP:10162"/>
        <dbReference type="Rhea" id="RHEA-COMP:10375"/>
        <dbReference type="ChEBI" id="CHEBI:33019"/>
        <dbReference type="ChEBI" id="CHEBI:57623"/>
        <dbReference type="ChEBI" id="CHEBI:74411"/>
        <dbReference type="ChEBI" id="CHEBI:74415"/>
        <dbReference type="EC" id="2.5.1.75"/>
    </reaction>
</comment>
<comment type="cofactor">
    <cofactor evidence="1">
        <name>Mg(2+)</name>
        <dbReference type="ChEBI" id="CHEBI:18420"/>
    </cofactor>
</comment>
<comment type="subunit">
    <text evidence="1">Monomer.</text>
</comment>
<comment type="similarity">
    <text evidence="1">Belongs to the IPP transferase family.</text>
</comment>
<name>MIAA_CUPTR</name>
<proteinExistence type="inferred from homology"/>
<accession>B3R6B8</accession>
<sequence>MSAVPHDSPAHPPVVCLLGPTASGKTAAALALAADAPVEIISLDSALVYREMDIGTAKPTREELAVAPHHLIDIIDPADSYSAAQFVADAERLIGEIHARGHVPLIVGGTMLYYKALTQGLNDLPQADAALRAELDQLAAERGWPALHAMLAEVDPVTAARLAPNDAQRIQRALEIHRLSGQPMSALLARQAEGRTFAGAADQRYRVIALEPSDRLALHHRIARRYDAMLAQGFIDEVERLRARGDLHPGLPSIRCVGYRQVWEYLDGEADFATMRERGIAATRQLCKRQLTWLRSTPERRVVDCLATDYVDQVRRLADFGH</sequence>
<organism>
    <name type="scientific">Cupriavidus taiwanensis (strain DSM 17343 / BCRC 17206 / CCUG 44338 / CIP 107171 / LMG 19424 / R1)</name>
    <name type="common">Ralstonia taiwanensis (strain LMG 19424)</name>
    <dbReference type="NCBI Taxonomy" id="977880"/>
    <lineage>
        <taxon>Bacteria</taxon>
        <taxon>Pseudomonadati</taxon>
        <taxon>Pseudomonadota</taxon>
        <taxon>Betaproteobacteria</taxon>
        <taxon>Burkholderiales</taxon>
        <taxon>Burkholderiaceae</taxon>
        <taxon>Cupriavidus</taxon>
    </lineage>
</organism>
<reference key="1">
    <citation type="journal article" date="2008" name="Genome Res.">
        <title>Genome sequence of the beta-rhizobium Cupriavidus taiwanensis and comparative genomics of rhizobia.</title>
        <authorList>
            <person name="Amadou C."/>
            <person name="Pascal G."/>
            <person name="Mangenot S."/>
            <person name="Glew M."/>
            <person name="Bontemps C."/>
            <person name="Capela D."/>
            <person name="Carrere S."/>
            <person name="Cruveiller S."/>
            <person name="Dossat C."/>
            <person name="Lajus A."/>
            <person name="Marchetti M."/>
            <person name="Poinsot V."/>
            <person name="Rouy Z."/>
            <person name="Servin B."/>
            <person name="Saad M."/>
            <person name="Schenowitz C."/>
            <person name="Barbe V."/>
            <person name="Batut J."/>
            <person name="Medigue C."/>
            <person name="Masson-Boivin C."/>
        </authorList>
    </citation>
    <scope>NUCLEOTIDE SEQUENCE [LARGE SCALE GENOMIC DNA]</scope>
    <source>
        <strain>DSM 17343 / BCRC 17206 / CCUG 44338 / CIP 107171 / LMG 19424 / R1</strain>
    </source>
</reference>
<gene>
    <name evidence="1" type="primary">miaA</name>
    <name type="ordered locus">RALTA_A2545</name>
</gene>
<evidence type="ECO:0000255" key="1">
    <source>
        <dbReference type="HAMAP-Rule" id="MF_00185"/>
    </source>
</evidence>
<protein>
    <recommendedName>
        <fullName evidence="1">tRNA dimethylallyltransferase</fullName>
        <ecNumber evidence="1">2.5.1.75</ecNumber>
    </recommendedName>
    <alternativeName>
        <fullName evidence="1">Dimethylallyl diphosphate:tRNA dimethylallyltransferase</fullName>
        <shortName evidence="1">DMAPP:tRNA dimethylallyltransferase</shortName>
        <shortName evidence="1">DMATase</shortName>
    </alternativeName>
    <alternativeName>
        <fullName evidence="1">Isopentenyl-diphosphate:tRNA isopentenyltransferase</fullName>
        <shortName evidence="1">IPP transferase</shortName>
        <shortName evidence="1">IPPT</shortName>
        <shortName evidence="1">IPTase</shortName>
    </alternativeName>
</protein>
<dbReference type="EC" id="2.5.1.75" evidence="1"/>
<dbReference type="EMBL" id="CU633749">
    <property type="protein sequence ID" value="CAQ70476.1"/>
    <property type="molecule type" value="Genomic_DNA"/>
</dbReference>
<dbReference type="RefSeq" id="WP_012353772.1">
    <property type="nucleotide sequence ID" value="NC_010528.1"/>
</dbReference>
<dbReference type="SMR" id="B3R6B8"/>
<dbReference type="GeneID" id="29762886"/>
<dbReference type="KEGG" id="cti:RALTA_A2545"/>
<dbReference type="eggNOG" id="COG0324">
    <property type="taxonomic scope" value="Bacteria"/>
</dbReference>
<dbReference type="HOGENOM" id="CLU_032616_0_0_4"/>
<dbReference type="BioCyc" id="CTAI977880:RALTA_RS12375-MONOMER"/>
<dbReference type="Proteomes" id="UP000001692">
    <property type="component" value="Chromosome 1"/>
</dbReference>
<dbReference type="GO" id="GO:0005524">
    <property type="term" value="F:ATP binding"/>
    <property type="evidence" value="ECO:0007669"/>
    <property type="project" value="UniProtKB-UniRule"/>
</dbReference>
<dbReference type="GO" id="GO:0052381">
    <property type="term" value="F:tRNA dimethylallyltransferase activity"/>
    <property type="evidence" value="ECO:0007669"/>
    <property type="project" value="UniProtKB-UniRule"/>
</dbReference>
<dbReference type="GO" id="GO:0006400">
    <property type="term" value="P:tRNA modification"/>
    <property type="evidence" value="ECO:0007669"/>
    <property type="project" value="TreeGrafter"/>
</dbReference>
<dbReference type="FunFam" id="1.10.20.140:FF:000001">
    <property type="entry name" value="tRNA dimethylallyltransferase"/>
    <property type="match status" value="1"/>
</dbReference>
<dbReference type="Gene3D" id="1.10.20.140">
    <property type="match status" value="1"/>
</dbReference>
<dbReference type="Gene3D" id="3.40.50.300">
    <property type="entry name" value="P-loop containing nucleotide triphosphate hydrolases"/>
    <property type="match status" value="1"/>
</dbReference>
<dbReference type="HAMAP" id="MF_00185">
    <property type="entry name" value="IPP_trans"/>
    <property type="match status" value="1"/>
</dbReference>
<dbReference type="InterPro" id="IPR039657">
    <property type="entry name" value="Dimethylallyltransferase"/>
</dbReference>
<dbReference type="InterPro" id="IPR018022">
    <property type="entry name" value="IPT"/>
</dbReference>
<dbReference type="InterPro" id="IPR027417">
    <property type="entry name" value="P-loop_NTPase"/>
</dbReference>
<dbReference type="NCBIfam" id="TIGR00174">
    <property type="entry name" value="miaA"/>
    <property type="match status" value="1"/>
</dbReference>
<dbReference type="PANTHER" id="PTHR11088">
    <property type="entry name" value="TRNA DIMETHYLALLYLTRANSFERASE"/>
    <property type="match status" value="1"/>
</dbReference>
<dbReference type="PANTHER" id="PTHR11088:SF60">
    <property type="entry name" value="TRNA DIMETHYLALLYLTRANSFERASE"/>
    <property type="match status" value="1"/>
</dbReference>
<dbReference type="Pfam" id="PF01715">
    <property type="entry name" value="IPPT"/>
    <property type="match status" value="1"/>
</dbReference>
<dbReference type="SUPFAM" id="SSF52540">
    <property type="entry name" value="P-loop containing nucleoside triphosphate hydrolases"/>
    <property type="match status" value="1"/>
</dbReference>